<organism>
    <name type="scientific">Bos taurus</name>
    <name type="common">Bovine</name>
    <dbReference type="NCBI Taxonomy" id="9913"/>
    <lineage>
        <taxon>Eukaryota</taxon>
        <taxon>Metazoa</taxon>
        <taxon>Chordata</taxon>
        <taxon>Craniata</taxon>
        <taxon>Vertebrata</taxon>
        <taxon>Euteleostomi</taxon>
        <taxon>Mammalia</taxon>
        <taxon>Eutheria</taxon>
        <taxon>Laurasiatheria</taxon>
        <taxon>Artiodactyla</taxon>
        <taxon>Ruminantia</taxon>
        <taxon>Pecora</taxon>
        <taxon>Bovidae</taxon>
        <taxon>Bovinae</taxon>
        <taxon>Bos</taxon>
    </lineage>
</organism>
<dbReference type="EMBL" id="M11116">
    <property type="protein sequence ID" value="AAA30790.1"/>
    <property type="molecule type" value="mRNA"/>
</dbReference>
<dbReference type="PIR" id="A94279">
    <property type="entry name" value="RGBOT2"/>
</dbReference>
<dbReference type="RefSeq" id="NP_776751.1">
    <property type="nucleotide sequence ID" value="NM_174326.2"/>
</dbReference>
<dbReference type="PDB" id="6PGS">
    <property type="method" value="X-ray"/>
    <property type="resolution" value="2.90 A"/>
    <property type="chains" value="B=344-354"/>
</dbReference>
<dbReference type="PDB" id="6PH7">
    <property type="method" value="X-ray"/>
    <property type="resolution" value="2.90 A"/>
    <property type="chains" value="B=344-354"/>
</dbReference>
<dbReference type="PDBsum" id="6PGS"/>
<dbReference type="PDBsum" id="6PH7"/>
<dbReference type="SMR" id="P04696"/>
<dbReference type="FunCoup" id="P04696">
    <property type="interactions" value="603"/>
</dbReference>
<dbReference type="STRING" id="9913.ENSBTAP00000017305"/>
<dbReference type="PaxDb" id="9913-ENSBTAP00000017305"/>
<dbReference type="Ensembl" id="ENSBTAT00000017305.3">
    <property type="protein sequence ID" value="ENSBTAP00000017305.2"/>
    <property type="gene ID" value="ENSBTAG00000013017.4"/>
</dbReference>
<dbReference type="GeneID" id="281795"/>
<dbReference type="KEGG" id="bta:281795"/>
<dbReference type="CTD" id="2780"/>
<dbReference type="VEuPathDB" id="HostDB:ENSBTAG00000013017"/>
<dbReference type="VGNC" id="VGNC:29455">
    <property type="gene designation" value="GNAT2"/>
</dbReference>
<dbReference type="eggNOG" id="KOG0082">
    <property type="taxonomic scope" value="Eukaryota"/>
</dbReference>
<dbReference type="GeneTree" id="ENSGT00940000158399"/>
<dbReference type="HOGENOM" id="CLU_014184_6_0_1"/>
<dbReference type="InParanoid" id="P04696"/>
<dbReference type="OMA" id="ICKPDYM"/>
<dbReference type="OrthoDB" id="5817230at2759"/>
<dbReference type="TreeFam" id="TF300673"/>
<dbReference type="Reactome" id="R-BTA-4086398">
    <property type="pathway name" value="Ca2+ pathway"/>
</dbReference>
<dbReference type="Reactome" id="R-BTA-418594">
    <property type="pathway name" value="G alpha (i) signalling events"/>
</dbReference>
<dbReference type="Proteomes" id="UP000009136">
    <property type="component" value="Chromosome 3"/>
</dbReference>
<dbReference type="Bgee" id="ENSBTAG00000013017">
    <property type="expression patterns" value="Expressed in retina and 107 other cell types or tissues"/>
</dbReference>
<dbReference type="GO" id="GO:0005737">
    <property type="term" value="C:cytoplasm"/>
    <property type="evidence" value="ECO:0000318"/>
    <property type="project" value="GO_Central"/>
</dbReference>
<dbReference type="GO" id="GO:0005834">
    <property type="term" value="C:heterotrimeric G-protein complex"/>
    <property type="evidence" value="ECO:0000318"/>
    <property type="project" value="GO_Central"/>
</dbReference>
<dbReference type="GO" id="GO:0001917">
    <property type="term" value="C:photoreceptor inner segment"/>
    <property type="evidence" value="ECO:0000318"/>
    <property type="project" value="GO_Central"/>
</dbReference>
<dbReference type="GO" id="GO:0001750">
    <property type="term" value="C:photoreceptor outer segment"/>
    <property type="evidence" value="ECO:0000314"/>
    <property type="project" value="UniProtKB"/>
</dbReference>
<dbReference type="GO" id="GO:0042622">
    <property type="term" value="C:photoreceptor outer segment membrane"/>
    <property type="evidence" value="ECO:0000314"/>
    <property type="project" value="UniProtKB"/>
</dbReference>
<dbReference type="GO" id="GO:0045202">
    <property type="term" value="C:synapse"/>
    <property type="evidence" value="ECO:0007669"/>
    <property type="project" value="Ensembl"/>
</dbReference>
<dbReference type="GO" id="GO:0001664">
    <property type="term" value="F:G protein-coupled receptor binding"/>
    <property type="evidence" value="ECO:0000318"/>
    <property type="project" value="GO_Central"/>
</dbReference>
<dbReference type="GO" id="GO:0031683">
    <property type="term" value="F:G-protein beta/gamma-subunit complex binding"/>
    <property type="evidence" value="ECO:0000318"/>
    <property type="project" value="GO_Central"/>
</dbReference>
<dbReference type="GO" id="GO:0005525">
    <property type="term" value="F:GTP binding"/>
    <property type="evidence" value="ECO:0007669"/>
    <property type="project" value="UniProtKB-KW"/>
</dbReference>
<dbReference type="GO" id="GO:0003924">
    <property type="term" value="F:GTPase activity"/>
    <property type="evidence" value="ECO:0000318"/>
    <property type="project" value="GO_Central"/>
</dbReference>
<dbReference type="GO" id="GO:0046872">
    <property type="term" value="F:metal ion binding"/>
    <property type="evidence" value="ECO:0007669"/>
    <property type="project" value="UniProtKB-KW"/>
</dbReference>
<dbReference type="GO" id="GO:0007188">
    <property type="term" value="P:adenylate cyclase-modulating G protein-coupled receptor signaling pathway"/>
    <property type="evidence" value="ECO:0000318"/>
    <property type="project" value="GO_Central"/>
</dbReference>
<dbReference type="GO" id="GO:0120302">
    <property type="term" value="P:background adaptation"/>
    <property type="evidence" value="ECO:0007669"/>
    <property type="project" value="Ensembl"/>
</dbReference>
<dbReference type="GO" id="GO:0000902">
    <property type="term" value="P:cell morphogenesis"/>
    <property type="evidence" value="ECO:0007669"/>
    <property type="project" value="Ensembl"/>
</dbReference>
<dbReference type="GO" id="GO:1904390">
    <property type="term" value="P:cone retinal bipolar cell differentiation"/>
    <property type="evidence" value="ECO:0007669"/>
    <property type="project" value="Ensembl"/>
</dbReference>
<dbReference type="GO" id="GO:0001580">
    <property type="term" value="P:detection of chemical stimulus involved in sensory perception of bitter taste"/>
    <property type="evidence" value="ECO:0000318"/>
    <property type="project" value="GO_Central"/>
</dbReference>
<dbReference type="GO" id="GO:0050908">
    <property type="term" value="P:detection of light stimulus involved in visual perception"/>
    <property type="evidence" value="ECO:0007669"/>
    <property type="project" value="Ensembl"/>
</dbReference>
<dbReference type="GO" id="GO:0042417">
    <property type="term" value="P:dopamine metabolic process"/>
    <property type="evidence" value="ECO:0007669"/>
    <property type="project" value="Ensembl"/>
</dbReference>
<dbReference type="GO" id="GO:0010467">
    <property type="term" value="P:gene expression"/>
    <property type="evidence" value="ECO:0007669"/>
    <property type="project" value="Ensembl"/>
</dbReference>
<dbReference type="GO" id="GO:0048877">
    <property type="term" value="P:homeostasis of number of retina cells"/>
    <property type="evidence" value="ECO:0007669"/>
    <property type="project" value="Ensembl"/>
</dbReference>
<dbReference type="GO" id="GO:0051938">
    <property type="term" value="P:L-glutamate import"/>
    <property type="evidence" value="ECO:0007669"/>
    <property type="project" value="Ensembl"/>
</dbReference>
<dbReference type="GO" id="GO:0097719">
    <property type="term" value="P:neural tissue regeneration"/>
    <property type="evidence" value="ECO:0007669"/>
    <property type="project" value="Ensembl"/>
</dbReference>
<dbReference type="GO" id="GO:0007602">
    <property type="term" value="P:phototransduction"/>
    <property type="evidence" value="ECO:0007669"/>
    <property type="project" value="Ensembl"/>
</dbReference>
<dbReference type="GO" id="GO:0008104">
    <property type="term" value="P:protein localization"/>
    <property type="evidence" value="ECO:0007669"/>
    <property type="project" value="Ensembl"/>
</dbReference>
<dbReference type="GO" id="GO:0150103">
    <property type="term" value="P:reactive gliosis"/>
    <property type="evidence" value="ECO:0007669"/>
    <property type="project" value="Ensembl"/>
</dbReference>
<dbReference type="GO" id="GO:0009411">
    <property type="term" value="P:response to UV"/>
    <property type="evidence" value="ECO:0007669"/>
    <property type="project" value="Ensembl"/>
</dbReference>
<dbReference type="GO" id="GO:0046549">
    <property type="term" value="P:retinal cone cell development"/>
    <property type="evidence" value="ECO:0007669"/>
    <property type="project" value="Ensembl"/>
</dbReference>
<dbReference type="GO" id="GO:0060221">
    <property type="term" value="P:retinal rod cell differentiation"/>
    <property type="evidence" value="ECO:0007669"/>
    <property type="project" value="Ensembl"/>
</dbReference>
<dbReference type="GO" id="GO:0048771">
    <property type="term" value="P:tissue remodeling"/>
    <property type="evidence" value="ECO:0007669"/>
    <property type="project" value="Ensembl"/>
</dbReference>
<dbReference type="GO" id="GO:0007632">
    <property type="term" value="P:visual behavior"/>
    <property type="evidence" value="ECO:0007669"/>
    <property type="project" value="Ensembl"/>
</dbReference>
<dbReference type="CDD" id="cd00066">
    <property type="entry name" value="G-alpha"/>
    <property type="match status" value="1"/>
</dbReference>
<dbReference type="FunFam" id="1.10.400.10:FF:000001">
    <property type="entry name" value="Guanine nucleotide-binding protein G(I) subunit alpha"/>
    <property type="match status" value="1"/>
</dbReference>
<dbReference type="FunFam" id="3.40.50.300:FF:000720">
    <property type="entry name" value="Guanine nucleotide-binding protein G(k) subunit alpha"/>
    <property type="match status" value="1"/>
</dbReference>
<dbReference type="FunFam" id="3.40.50.300:FF:000256">
    <property type="entry name" value="Guanine nucleotide-binding protein G(t) subunit alpha"/>
    <property type="match status" value="1"/>
</dbReference>
<dbReference type="Gene3D" id="1.10.400.10">
    <property type="entry name" value="GI Alpha 1, domain 2-like"/>
    <property type="match status" value="1"/>
</dbReference>
<dbReference type="Gene3D" id="3.40.50.300">
    <property type="entry name" value="P-loop containing nucleotide triphosphate hydrolases"/>
    <property type="match status" value="1"/>
</dbReference>
<dbReference type="InterPro" id="IPR001408">
    <property type="entry name" value="Gprotein_alpha_I"/>
</dbReference>
<dbReference type="InterPro" id="IPR001019">
    <property type="entry name" value="Gprotein_alpha_su"/>
</dbReference>
<dbReference type="InterPro" id="IPR011025">
    <property type="entry name" value="GproteinA_insert"/>
</dbReference>
<dbReference type="InterPro" id="IPR027417">
    <property type="entry name" value="P-loop_NTPase"/>
</dbReference>
<dbReference type="PANTHER" id="PTHR10218">
    <property type="entry name" value="GTP-BINDING PROTEIN ALPHA SUBUNIT"/>
    <property type="match status" value="1"/>
</dbReference>
<dbReference type="PANTHER" id="PTHR10218:SF68">
    <property type="entry name" value="GUANINE NUCLEOTIDE-BINDING PROTEIN G(T) SUBUNIT ALPHA-2"/>
    <property type="match status" value="1"/>
</dbReference>
<dbReference type="Pfam" id="PF00503">
    <property type="entry name" value="G-alpha"/>
    <property type="match status" value="1"/>
</dbReference>
<dbReference type="PRINTS" id="PR00318">
    <property type="entry name" value="GPROTEINA"/>
</dbReference>
<dbReference type="PRINTS" id="PR00441">
    <property type="entry name" value="GPROTEINAI"/>
</dbReference>
<dbReference type="SMART" id="SM00275">
    <property type="entry name" value="G_alpha"/>
    <property type="match status" value="1"/>
</dbReference>
<dbReference type="SUPFAM" id="SSF52540">
    <property type="entry name" value="P-loop containing nucleoside triphosphate hydrolases"/>
    <property type="match status" value="1"/>
</dbReference>
<dbReference type="SUPFAM" id="SSF47895">
    <property type="entry name" value="Transducin (alpha subunit), insertion domain"/>
    <property type="match status" value="1"/>
</dbReference>
<dbReference type="PROSITE" id="PS51882">
    <property type="entry name" value="G_ALPHA"/>
    <property type="match status" value="1"/>
</dbReference>
<accession>P04696</accession>
<proteinExistence type="evidence at protein level"/>
<feature type="initiator methionine" description="Removed">
    <location>
        <position position="1"/>
    </location>
</feature>
<feature type="chain" id="PRO_0000203739" description="Guanine nucleotide-binding protein G(t) subunit alpha-2">
    <location>
        <begin position="2"/>
        <end position="354"/>
    </location>
</feature>
<feature type="domain" description="G-alpha" evidence="3">
    <location>
        <begin position="32"/>
        <end position="354"/>
    </location>
</feature>
<feature type="region of interest" description="Disordered" evidence="4">
    <location>
        <begin position="1"/>
        <end position="27"/>
    </location>
</feature>
<feature type="region of interest" description="G1 motif" evidence="3">
    <location>
        <begin position="35"/>
        <end position="48"/>
    </location>
</feature>
<feature type="region of interest" description="G2 motif" evidence="3">
    <location>
        <begin position="173"/>
        <end position="181"/>
    </location>
</feature>
<feature type="region of interest" description="G3 motif" evidence="3">
    <location>
        <begin position="196"/>
        <end position="205"/>
    </location>
</feature>
<feature type="region of interest" description="G4 motif" evidence="3">
    <location>
        <begin position="265"/>
        <end position="272"/>
    </location>
</feature>
<feature type="region of interest" description="G5 motif" evidence="3">
    <location>
        <begin position="324"/>
        <end position="329"/>
    </location>
</feature>
<feature type="compositionally biased region" description="Basic and acidic residues" evidence="4">
    <location>
        <begin position="7"/>
        <end position="27"/>
    </location>
</feature>
<feature type="binding site" evidence="1">
    <location>
        <begin position="40"/>
        <end position="47"/>
    </location>
    <ligand>
        <name>GTP</name>
        <dbReference type="ChEBI" id="CHEBI:37565"/>
    </ligand>
</feature>
<feature type="binding site" evidence="1">
    <location>
        <position position="47"/>
    </location>
    <ligand>
        <name>Mg(2+)</name>
        <dbReference type="ChEBI" id="CHEBI:18420"/>
    </ligand>
</feature>
<feature type="binding site" evidence="1">
    <location>
        <begin position="175"/>
        <end position="181"/>
    </location>
    <ligand>
        <name>GTP</name>
        <dbReference type="ChEBI" id="CHEBI:37565"/>
    </ligand>
</feature>
<feature type="binding site" evidence="1">
    <location>
        <position position="181"/>
    </location>
    <ligand>
        <name>Mg(2+)</name>
        <dbReference type="ChEBI" id="CHEBI:18420"/>
    </ligand>
</feature>
<feature type="binding site" evidence="1">
    <location>
        <begin position="200"/>
        <end position="204"/>
    </location>
    <ligand>
        <name>GTP</name>
        <dbReference type="ChEBI" id="CHEBI:37565"/>
    </ligand>
</feature>
<feature type="binding site" evidence="1">
    <location>
        <begin position="269"/>
        <end position="272"/>
    </location>
    <ligand>
        <name>GTP</name>
        <dbReference type="ChEBI" id="CHEBI:37565"/>
    </ligand>
</feature>
<feature type="binding site" evidence="1">
    <location>
        <position position="326"/>
    </location>
    <ligand>
        <name>GTP</name>
        <dbReference type="ChEBI" id="CHEBI:37565"/>
    </ligand>
</feature>
<feature type="lipid moiety-binding region" description="N-myristoyl glycine" evidence="1">
    <location>
        <position position="2"/>
    </location>
</feature>
<feature type="helix" evidence="7">
    <location>
        <begin position="345"/>
        <end position="350"/>
    </location>
</feature>
<gene>
    <name type="primary">GNAT2</name>
</gene>
<sequence length="354" mass="40144">MGSGASAEDKELAKRSKELEKKLQEDADKEAKTVKLLLLGAGESGKSTIVKQMKIIHQDGYSPEECLEYKAIIYGNVLQSILAIIRAMPTLGIDYAEVSCVDNGRQLNNLADSIEEGTMPPELVEVIRKLWKDGGVQACFDRAAEYQLNDSASYYLNQLDRITAPDYLPNEQDVLRSRVKTTGIIETKFSVKDLNFRMFDVGGQRSERKKWIHCFEGVTCIIFCAALSAYDMVLVEDDEVNRMHESLHLFNSICNHKFFAATSIVLFLNKKDLFEEKIKKVHLSICFPEYDGNNSYEDAGNYIKSQFLDLNMRKDVKEIYSHMTCATDTQNVKFVFDAVTDIIIKENLKDCGLF</sequence>
<reference key="1">
    <citation type="journal article" date="1985" name="Science">
        <title>Sequence of the alpha subunit of photoreceptor G protein: homologies between transducin, ras, and elongation factors.</title>
        <authorList>
            <person name="Lochrie M.A."/>
            <person name="Hurley J.B."/>
            <person name="Simon M.I."/>
        </authorList>
    </citation>
    <scope>NUCLEOTIDE SEQUENCE [MRNA]</scope>
</reference>
<reference key="2">
    <citation type="journal article" date="1984" name="J. Biol. Chem.">
        <title>Characterization of transducin from bovine retinal rod outer segments. Mechanism and effects of cholera toxin-catalyzed ADP-ribosylation.</title>
        <authorList>
            <person name="Navon S."/>
            <person name="Fung B.K.-K."/>
        </authorList>
    </citation>
    <scope>FUNCTION</scope>
</reference>
<evidence type="ECO:0000250" key="1"/>
<evidence type="ECO:0000250" key="2">
    <source>
        <dbReference type="UniProtKB" id="P50149"/>
    </source>
</evidence>
<evidence type="ECO:0000255" key="3">
    <source>
        <dbReference type="PROSITE-ProRule" id="PRU01230"/>
    </source>
</evidence>
<evidence type="ECO:0000256" key="4">
    <source>
        <dbReference type="SAM" id="MobiDB-lite"/>
    </source>
</evidence>
<evidence type="ECO:0000269" key="5">
    <source>
    </source>
</evidence>
<evidence type="ECO:0000305" key="6"/>
<evidence type="ECO:0007829" key="7">
    <source>
        <dbReference type="PDB" id="6PH7"/>
    </source>
</evidence>
<comment type="function">
    <text evidence="5">Guanine nucleotide-binding proteins (G proteins) are involved as modulators or transducers in various transmembrane signaling systems. Transducin is an amplifier and one of the transducers of a visual impulse that performs the coupling between rhodopsin and cGMP-phosphodiesterase.</text>
</comment>
<comment type="subunit">
    <text>G proteins are composed of 3 units; alpha, beta and gamma. The alpha chain contains the guanine nucleotide binding site.</text>
</comment>
<comment type="subcellular location">
    <subcellularLocation>
        <location evidence="2">Cell projection</location>
        <location evidence="2">Cilium</location>
        <location evidence="2">Photoreceptor outer segment</location>
    </subcellularLocation>
    <subcellularLocation>
        <location evidence="2">Photoreceptor inner segment</location>
    </subcellularLocation>
    <text evidence="2">Localizes mainly in the outer segment in the dark-adapted state, whereas is translocated to the inner part of the photoreceptors in the light-adapted state. During dark-adapted conditions, in the presence of UNC119 mislocalizes from the outer segment to the inner part of rod photoreceptors which leads to decreased photoreceptor damage caused by light.</text>
</comment>
<comment type="tissue specificity">
    <text>Retinal rod outer segment.</text>
</comment>
<comment type="similarity">
    <text evidence="6">Belongs to the G-alpha family. G(i/o/t/z) subfamily.</text>
</comment>
<protein>
    <recommendedName>
        <fullName>Guanine nucleotide-binding protein G(t) subunit alpha-2</fullName>
    </recommendedName>
    <alternativeName>
        <fullName>Transducin alpha-2 chain</fullName>
    </alternativeName>
</protein>
<name>GNAT2_BOVIN</name>
<keyword id="KW-0002">3D-structure</keyword>
<keyword id="KW-0966">Cell projection</keyword>
<keyword id="KW-0342">GTP-binding</keyword>
<keyword id="KW-0449">Lipoprotein</keyword>
<keyword id="KW-0460">Magnesium</keyword>
<keyword id="KW-0479">Metal-binding</keyword>
<keyword id="KW-0519">Myristate</keyword>
<keyword id="KW-0547">Nucleotide-binding</keyword>
<keyword id="KW-1185">Reference proteome</keyword>
<keyword id="KW-0716">Sensory transduction</keyword>
<keyword id="KW-0807">Transducer</keyword>
<keyword id="KW-0844">Vision</keyword>